<evidence type="ECO:0000250" key="1"/>
<evidence type="ECO:0000250" key="2">
    <source>
        <dbReference type="UniProtKB" id="Q04636"/>
    </source>
</evidence>
<evidence type="ECO:0000256" key="3">
    <source>
        <dbReference type="SAM" id="MobiDB-lite"/>
    </source>
</evidence>
<evidence type="ECO:0000305" key="4"/>
<gene>
    <name type="primary">ctc-1</name>
    <name type="synonym">pob3</name>
    <name type="ORF">NCU00133</name>
</gene>
<comment type="function">
    <text evidence="1">Component of the FACT complex, a general chromatin factor that acts to reorganize nucleosomes. The FACT complex is involved in multiple processes that require DNA as a template such as mRNA elongation, DNA replication and DNA repair. During transcription elongation the FACT complex acts as a histone chaperone that both destabilizes and restores nucleosomal structure. It facilitates the passage of RNA polymerase II and transcription by promoting the dissociation of one histone H2A-H2B dimer from the nucleosome, then subsequently promotes the reestablishment of the nucleosome following the passage of RNA polymerase II (By similarity).</text>
</comment>
<comment type="subunit">
    <text evidence="1">Forms a stable heterodimer with ctc-2/spt16. The dimer of ctc-1 and ctc-2 weakly associates with multiple molecules of nhp-1/nhp6 to form the FACT complex (By similarity).</text>
</comment>
<comment type="subcellular location">
    <subcellularLocation>
        <location evidence="2">Nucleus</location>
    </subcellularLocation>
    <subcellularLocation>
        <location evidence="2">Chromosome</location>
    </subcellularLocation>
    <text evidence="2">Colocalizes with RNA polymerase II on chromatin. Recruited to actively transcribed loci.</text>
</comment>
<comment type="miscellaneous">
    <text>In contrast to the orthologous protein in animals and plants, this protein does not contain a HMG box DNA-binding domain. This function may instead be provided by the HMG box of the associated nhp-1 protein in the FACT complex of fungi.</text>
</comment>
<comment type="similarity">
    <text evidence="4">Belongs to the SSRP1 family.</text>
</comment>
<name>POB3_NEUCR</name>
<feature type="chain" id="PRO_0000245209" description="FACT complex subunit ctc-1">
    <location>
        <begin position="1"/>
        <end position="565"/>
    </location>
</feature>
<feature type="region of interest" description="Disordered" evidence="3">
    <location>
        <begin position="151"/>
        <end position="173"/>
    </location>
</feature>
<feature type="region of interest" description="Disordered" evidence="3">
    <location>
        <begin position="477"/>
        <end position="565"/>
    </location>
</feature>
<feature type="compositionally biased region" description="Gly residues" evidence="3">
    <location>
        <begin position="152"/>
        <end position="165"/>
    </location>
</feature>
<feature type="compositionally biased region" description="Acidic residues" evidence="3">
    <location>
        <begin position="478"/>
        <end position="489"/>
    </location>
</feature>
<feature type="compositionally biased region" description="Acidic residues" evidence="3">
    <location>
        <begin position="500"/>
        <end position="522"/>
    </location>
</feature>
<feature type="compositionally biased region" description="Acidic residues" evidence="3">
    <location>
        <begin position="532"/>
        <end position="553"/>
    </location>
</feature>
<proteinExistence type="inferred from homology"/>
<keyword id="KW-0158">Chromosome</keyword>
<keyword id="KW-0227">DNA damage</keyword>
<keyword id="KW-0234">DNA repair</keyword>
<keyword id="KW-0235">DNA replication</keyword>
<keyword id="KW-0539">Nucleus</keyword>
<keyword id="KW-1185">Reference proteome</keyword>
<keyword id="KW-0804">Transcription</keyword>
<keyword id="KW-0805">Transcription regulation</keyword>
<dbReference type="EMBL" id="CM002238">
    <property type="protein sequence ID" value="EAA26950.1"/>
    <property type="molecule type" value="Genomic_DNA"/>
</dbReference>
<dbReference type="RefSeq" id="XP_956186.1">
    <property type="nucleotide sequence ID" value="XM_951093.3"/>
</dbReference>
<dbReference type="SMR" id="Q7RWW0"/>
<dbReference type="FunCoup" id="Q7RWW0">
    <property type="interactions" value="980"/>
</dbReference>
<dbReference type="STRING" id="367110.Q7RWW0"/>
<dbReference type="PaxDb" id="5141-EFNCRP00000000458"/>
<dbReference type="EnsemblFungi" id="EAA26950">
    <property type="protein sequence ID" value="EAA26950"/>
    <property type="gene ID" value="NCU00133"/>
</dbReference>
<dbReference type="GeneID" id="23568335"/>
<dbReference type="KEGG" id="ncr:NCU00133"/>
<dbReference type="VEuPathDB" id="FungiDB:NCU00133"/>
<dbReference type="HOGENOM" id="CLU_017374_3_0_1"/>
<dbReference type="InParanoid" id="Q7RWW0"/>
<dbReference type="OrthoDB" id="498543at2759"/>
<dbReference type="Proteomes" id="UP000001805">
    <property type="component" value="Chromosome 3, Linkage Group III"/>
</dbReference>
<dbReference type="GO" id="GO:0000781">
    <property type="term" value="C:chromosome, telomeric region"/>
    <property type="evidence" value="ECO:0007669"/>
    <property type="project" value="GOC"/>
</dbReference>
<dbReference type="GO" id="GO:0035101">
    <property type="term" value="C:FACT complex"/>
    <property type="evidence" value="ECO:0000318"/>
    <property type="project" value="GO_Central"/>
</dbReference>
<dbReference type="GO" id="GO:0003677">
    <property type="term" value="F:DNA binding"/>
    <property type="evidence" value="ECO:0007669"/>
    <property type="project" value="InterPro"/>
</dbReference>
<dbReference type="GO" id="GO:0042393">
    <property type="term" value="F:histone binding"/>
    <property type="evidence" value="ECO:0000318"/>
    <property type="project" value="GO_Central"/>
</dbReference>
<dbReference type="GO" id="GO:0031491">
    <property type="term" value="F:nucleosome binding"/>
    <property type="evidence" value="ECO:0000318"/>
    <property type="project" value="GO_Central"/>
</dbReference>
<dbReference type="GO" id="GO:0006281">
    <property type="term" value="P:DNA repair"/>
    <property type="evidence" value="ECO:0007669"/>
    <property type="project" value="UniProtKB-KW"/>
</dbReference>
<dbReference type="GO" id="GO:0006335">
    <property type="term" value="P:DNA replication-dependent chromatin assembly"/>
    <property type="evidence" value="ECO:0007669"/>
    <property type="project" value="EnsemblFungi"/>
</dbReference>
<dbReference type="GO" id="GO:0006261">
    <property type="term" value="P:DNA-templated DNA replication"/>
    <property type="evidence" value="ECO:0007669"/>
    <property type="project" value="EnsemblFungi"/>
</dbReference>
<dbReference type="GO" id="GO:0034728">
    <property type="term" value="P:nucleosome organization"/>
    <property type="evidence" value="ECO:0007669"/>
    <property type="project" value="EnsemblFungi"/>
</dbReference>
<dbReference type="GO" id="GO:0031508">
    <property type="term" value="P:pericentric heterochromatin formation"/>
    <property type="evidence" value="ECO:0007669"/>
    <property type="project" value="EnsemblFungi"/>
</dbReference>
<dbReference type="GO" id="GO:0045899">
    <property type="term" value="P:positive regulation of RNA polymerase II transcription preinitiation complex assembly"/>
    <property type="evidence" value="ECO:0007669"/>
    <property type="project" value="EnsemblFungi"/>
</dbReference>
<dbReference type="GO" id="GO:0030466">
    <property type="term" value="P:silent mating-type cassette heterochromatin formation"/>
    <property type="evidence" value="ECO:0007669"/>
    <property type="project" value="EnsemblFungi"/>
</dbReference>
<dbReference type="GO" id="GO:0031509">
    <property type="term" value="P:subtelomeric heterochromatin formation"/>
    <property type="evidence" value="ECO:0007669"/>
    <property type="project" value="EnsemblFungi"/>
</dbReference>
<dbReference type="CDD" id="cd13230">
    <property type="entry name" value="PH1_SSRP1-like"/>
    <property type="match status" value="1"/>
</dbReference>
<dbReference type="CDD" id="cd13231">
    <property type="entry name" value="PH2_SSRP1-like"/>
    <property type="match status" value="1"/>
</dbReference>
<dbReference type="CDD" id="cd13229">
    <property type="entry name" value="PH_TFIIH"/>
    <property type="match status" value="1"/>
</dbReference>
<dbReference type="FunFam" id="2.30.29.220:FF:000003">
    <property type="entry name" value="FACT complex subunit POB3"/>
    <property type="match status" value="1"/>
</dbReference>
<dbReference type="FunFam" id="2.30.29.30:FF:000146">
    <property type="entry name" value="FACT complex subunit POB3"/>
    <property type="match status" value="1"/>
</dbReference>
<dbReference type="FunFam" id="2.30.29.30:FF:000310">
    <property type="entry name" value="FACT complex subunit POB3"/>
    <property type="match status" value="1"/>
</dbReference>
<dbReference type="FunFam" id="2.30.29.150:FF:000001">
    <property type="entry name" value="Fact complex subunit ssrp1"/>
    <property type="match status" value="1"/>
</dbReference>
<dbReference type="Gene3D" id="2.30.29.150">
    <property type="match status" value="1"/>
</dbReference>
<dbReference type="Gene3D" id="2.30.29.30">
    <property type="entry name" value="Pleckstrin-homology domain (PH domain)/Phosphotyrosine-binding domain (PTB)"/>
    <property type="match status" value="2"/>
</dbReference>
<dbReference type="Gene3D" id="2.30.29.220">
    <property type="entry name" value="Structure-specific recognition protein (SSRP1)"/>
    <property type="match status" value="1"/>
</dbReference>
<dbReference type="InterPro" id="IPR011993">
    <property type="entry name" value="PH-like_dom_sf"/>
</dbReference>
<dbReference type="InterPro" id="IPR013719">
    <property type="entry name" value="RTT106/SPT16-like_middle_dom"/>
</dbReference>
<dbReference type="InterPro" id="IPR050454">
    <property type="entry name" value="RTT106/SSRP1_HistChap/FACT"/>
</dbReference>
<dbReference type="InterPro" id="IPR048993">
    <property type="entry name" value="SSRP1-like_PH1"/>
</dbReference>
<dbReference type="InterPro" id="IPR000969">
    <property type="entry name" value="SSRP1/POB3"/>
</dbReference>
<dbReference type="InterPro" id="IPR035417">
    <property type="entry name" value="SSRP1/POB3_N"/>
</dbReference>
<dbReference type="InterPro" id="IPR024954">
    <property type="entry name" value="SSRP1_DD"/>
</dbReference>
<dbReference type="InterPro" id="IPR038167">
    <property type="entry name" value="SSRP1_sf"/>
</dbReference>
<dbReference type="PANTHER" id="PTHR45849">
    <property type="entry name" value="FACT COMPLEX SUBUNIT SSRP1"/>
    <property type="match status" value="1"/>
</dbReference>
<dbReference type="PANTHER" id="PTHR45849:SF1">
    <property type="entry name" value="FACT COMPLEX SUBUNIT SSRP1"/>
    <property type="match status" value="1"/>
</dbReference>
<dbReference type="Pfam" id="PF21103">
    <property type="entry name" value="PH1_SSRP1-like"/>
    <property type="match status" value="1"/>
</dbReference>
<dbReference type="Pfam" id="PF17292">
    <property type="entry name" value="POB3_N"/>
    <property type="match status" value="1"/>
</dbReference>
<dbReference type="Pfam" id="PF08512">
    <property type="entry name" value="Rttp106-like_middle"/>
    <property type="match status" value="1"/>
</dbReference>
<dbReference type="Pfam" id="PF03531">
    <property type="entry name" value="SSrecog"/>
    <property type="match status" value="1"/>
</dbReference>
<dbReference type="PRINTS" id="PR00887">
    <property type="entry name" value="SSRCOGNITION"/>
</dbReference>
<dbReference type="SMART" id="SM01287">
    <property type="entry name" value="Rtt106"/>
    <property type="match status" value="1"/>
</dbReference>
<dbReference type="SUPFAM" id="SSF50729">
    <property type="entry name" value="PH domain-like"/>
    <property type="match status" value="1"/>
</dbReference>
<protein>
    <recommendedName>
        <fullName>FACT complex subunit ctc-1</fullName>
    </recommendedName>
    <alternativeName>
        <fullName>Chromatin transcription complex 1</fullName>
    </alternativeName>
    <alternativeName>
        <fullName>Facilitates chromatin transcription complex subunit ctc-1</fullName>
    </alternativeName>
</protein>
<reference key="1">
    <citation type="journal article" date="2003" name="Nature">
        <title>The genome sequence of the filamentous fungus Neurospora crassa.</title>
        <authorList>
            <person name="Galagan J.E."/>
            <person name="Calvo S.E."/>
            <person name="Borkovich K.A."/>
            <person name="Selker E.U."/>
            <person name="Read N.D."/>
            <person name="Jaffe D.B."/>
            <person name="FitzHugh W."/>
            <person name="Ma L.-J."/>
            <person name="Smirnov S."/>
            <person name="Purcell S."/>
            <person name="Rehman B."/>
            <person name="Elkins T."/>
            <person name="Engels R."/>
            <person name="Wang S."/>
            <person name="Nielsen C.B."/>
            <person name="Butler J."/>
            <person name="Endrizzi M."/>
            <person name="Qui D."/>
            <person name="Ianakiev P."/>
            <person name="Bell-Pedersen D."/>
            <person name="Nelson M.A."/>
            <person name="Werner-Washburne M."/>
            <person name="Selitrennikoff C.P."/>
            <person name="Kinsey J.A."/>
            <person name="Braun E.L."/>
            <person name="Zelter A."/>
            <person name="Schulte U."/>
            <person name="Kothe G.O."/>
            <person name="Jedd G."/>
            <person name="Mewes H.-W."/>
            <person name="Staben C."/>
            <person name="Marcotte E."/>
            <person name="Greenberg D."/>
            <person name="Roy A."/>
            <person name="Foley K."/>
            <person name="Naylor J."/>
            <person name="Stange-Thomann N."/>
            <person name="Barrett R."/>
            <person name="Gnerre S."/>
            <person name="Kamal M."/>
            <person name="Kamvysselis M."/>
            <person name="Mauceli E.W."/>
            <person name="Bielke C."/>
            <person name="Rudd S."/>
            <person name="Frishman D."/>
            <person name="Krystofova S."/>
            <person name="Rasmussen C."/>
            <person name="Metzenberg R.L."/>
            <person name="Perkins D.D."/>
            <person name="Kroken S."/>
            <person name="Cogoni C."/>
            <person name="Macino G."/>
            <person name="Catcheside D.E.A."/>
            <person name="Li W."/>
            <person name="Pratt R.J."/>
            <person name="Osmani S.A."/>
            <person name="DeSouza C.P.C."/>
            <person name="Glass N.L."/>
            <person name="Orbach M.J."/>
            <person name="Berglund J.A."/>
            <person name="Voelker R."/>
            <person name="Yarden O."/>
            <person name="Plamann M."/>
            <person name="Seiler S."/>
            <person name="Dunlap J.C."/>
            <person name="Radford A."/>
            <person name="Aramayo R."/>
            <person name="Natvig D.O."/>
            <person name="Alex L.A."/>
            <person name="Mannhaupt G."/>
            <person name="Ebbole D.J."/>
            <person name="Freitag M."/>
            <person name="Paulsen I."/>
            <person name="Sachs M.S."/>
            <person name="Lander E.S."/>
            <person name="Nusbaum C."/>
            <person name="Birren B.W."/>
        </authorList>
    </citation>
    <scope>NUCLEOTIDE SEQUENCE [LARGE SCALE GENOMIC DNA]</scope>
    <source>
        <strain>ATCC 24698 / 74-OR23-1A / CBS 708.71 / DSM 1257 / FGSC 987</strain>
    </source>
</reference>
<sequence>MAAIESFDNIYLDLSKESGKSRFAENGLGWKPAGGGEAFTLDSSNIGGAQWSRAARGYEVKILLRSSGVVQLDGFHQEDYERLSKIFKNWYSVNLENKEHSLRGWNWGKAEFSKAELTFNVQNRPAFEIPYSEISNTNLAGRNEIAVEFAGNDGGKSNGHSGTGGKGKKASAGKDQLVEVRFYIPGTTTRKEAEGGEAGSDADEEEKNAVTLFYDTLIEKAEIGETAGDTIATFLDVLHLTPRGRFDIDMYDASFRLRGKTYDYKIQYDAIKKFMVLPKPDDLHFLLCIGLDPPLRQGQTRYPFVVMQFKADEEVTLDLNITEEELNGKYKDKLQSHYEQPLHQVVAYIFKGLANKKVTTPAKDFTTHRQQYGIKCSIKASEGFLYCLEKAFMFVPKPATYISYEQTQSITFSRVGGAVSALSTFDITVHMKNGAGSSQFSNINREDLKALEEFFKLKGLRVKNEIDDDTNLIAAALGDDDMASSDEEAVGPKADRGSADEDEESVDEDFQAESESDVAEEYDSNHESDGSGSEESDVDNRVDDEDEDMDDDEGEKRPKKKKKTA</sequence>
<organism>
    <name type="scientific">Neurospora crassa (strain ATCC 24698 / 74-OR23-1A / CBS 708.71 / DSM 1257 / FGSC 987)</name>
    <dbReference type="NCBI Taxonomy" id="367110"/>
    <lineage>
        <taxon>Eukaryota</taxon>
        <taxon>Fungi</taxon>
        <taxon>Dikarya</taxon>
        <taxon>Ascomycota</taxon>
        <taxon>Pezizomycotina</taxon>
        <taxon>Sordariomycetes</taxon>
        <taxon>Sordariomycetidae</taxon>
        <taxon>Sordariales</taxon>
        <taxon>Sordariaceae</taxon>
        <taxon>Neurospora</taxon>
    </lineage>
</organism>
<accession>Q7RWW0</accession>